<organism>
    <name type="scientific">Vibrio cholerae serotype O1 (strain ATCC 39315 / El Tor Inaba N16961)</name>
    <dbReference type="NCBI Taxonomy" id="243277"/>
    <lineage>
        <taxon>Bacteria</taxon>
        <taxon>Pseudomonadati</taxon>
        <taxon>Pseudomonadota</taxon>
        <taxon>Gammaproteobacteria</taxon>
        <taxon>Vibrionales</taxon>
        <taxon>Vibrionaceae</taxon>
        <taxon>Vibrio</taxon>
    </lineage>
</organism>
<name>CUTC_VIBCH</name>
<comment type="subcellular location">
    <subcellularLocation>
        <location evidence="1">Cytoplasm</location>
    </subcellularLocation>
</comment>
<comment type="similarity">
    <text evidence="1">Belongs to the CutC family.</text>
</comment>
<comment type="caution">
    <text evidence="1">Once thought to be involved in copper homeostasis, experiments in E.coli have shown this is not the case.</text>
</comment>
<reference key="1">
    <citation type="journal article" date="2000" name="Nature">
        <title>DNA sequence of both chromosomes of the cholera pathogen Vibrio cholerae.</title>
        <authorList>
            <person name="Heidelberg J.F."/>
            <person name="Eisen J.A."/>
            <person name="Nelson W.C."/>
            <person name="Clayton R.A."/>
            <person name="Gwinn M.L."/>
            <person name="Dodson R.J."/>
            <person name="Haft D.H."/>
            <person name="Hickey E.K."/>
            <person name="Peterson J.D."/>
            <person name="Umayam L.A."/>
            <person name="Gill S.R."/>
            <person name="Nelson K.E."/>
            <person name="Read T.D."/>
            <person name="Tettelin H."/>
            <person name="Richardson D.L."/>
            <person name="Ermolaeva M.D."/>
            <person name="Vamathevan J.J."/>
            <person name="Bass S."/>
            <person name="Qin H."/>
            <person name="Dragoi I."/>
            <person name="Sellers P."/>
            <person name="McDonald L.A."/>
            <person name="Utterback T.R."/>
            <person name="Fleischmann R.D."/>
            <person name="Nierman W.C."/>
            <person name="White O."/>
            <person name="Salzberg S.L."/>
            <person name="Smith H.O."/>
            <person name="Colwell R.R."/>
            <person name="Mekalanos J.J."/>
            <person name="Venter J.C."/>
            <person name="Fraser C.M."/>
        </authorList>
    </citation>
    <scope>NUCLEOTIDE SEQUENCE [LARGE SCALE GENOMIC DNA]</scope>
    <source>
        <strain>ATCC 39315 / El Tor Inaba N16961</strain>
    </source>
</reference>
<accession>Q9KU00</accession>
<feature type="chain" id="PRO_0000215078" description="PF03932 family protein CutC">
    <location>
        <begin position="1"/>
        <end position="254"/>
    </location>
</feature>
<evidence type="ECO:0000255" key="1">
    <source>
        <dbReference type="HAMAP-Rule" id="MF_00795"/>
    </source>
</evidence>
<sequence length="254" mass="27192">MKYQVEVCIDNIESLHNAIAGGATRIELCSSLALGGLTPSAGLMYSAGRVSPIPAYAMIRPREGDFFYHDDELSIMAQDIRTAHQANLQGVVLGLLNADGTIDVKRSKPLIELAHSLGLGVTFHRAFDHCVNPEHALEEIIALGCERILTSGLARNAYLGIERLAQLVKQSAGRISIMAGAGINAQNVAEIALATGVNELHLSAKTTRPSEMLFIRSESKMGAADCDDFIIPVTSRDALQQTVHALAALNSVLH</sequence>
<gene>
    <name evidence="1" type="primary">cutC</name>
    <name type="ordered locus">VC_0730</name>
</gene>
<protein>
    <recommendedName>
        <fullName evidence="1">PF03932 family protein CutC</fullName>
    </recommendedName>
</protein>
<proteinExistence type="inferred from homology"/>
<dbReference type="EMBL" id="AE003852">
    <property type="protein sequence ID" value="AAF93895.1"/>
    <property type="molecule type" value="Genomic_DNA"/>
</dbReference>
<dbReference type="PIR" id="D82287">
    <property type="entry name" value="D82287"/>
</dbReference>
<dbReference type="RefSeq" id="NP_230379.1">
    <property type="nucleotide sequence ID" value="NC_002505.1"/>
</dbReference>
<dbReference type="RefSeq" id="WP_000877206.1">
    <property type="nucleotide sequence ID" value="NZ_LT906614.1"/>
</dbReference>
<dbReference type="SMR" id="Q9KU00"/>
<dbReference type="STRING" id="243277.VC_0730"/>
<dbReference type="DNASU" id="2615739"/>
<dbReference type="EnsemblBacteria" id="AAF93895">
    <property type="protein sequence ID" value="AAF93895"/>
    <property type="gene ID" value="VC_0730"/>
</dbReference>
<dbReference type="KEGG" id="vch:VC_0730"/>
<dbReference type="PATRIC" id="fig|243277.26.peg.698"/>
<dbReference type="eggNOG" id="COG3142">
    <property type="taxonomic scope" value="Bacteria"/>
</dbReference>
<dbReference type="HOGENOM" id="CLU_050555_3_1_6"/>
<dbReference type="Proteomes" id="UP000000584">
    <property type="component" value="Chromosome 1"/>
</dbReference>
<dbReference type="GO" id="GO:0005737">
    <property type="term" value="C:cytoplasm"/>
    <property type="evidence" value="ECO:0007669"/>
    <property type="project" value="UniProtKB-SubCell"/>
</dbReference>
<dbReference type="GO" id="GO:0005507">
    <property type="term" value="F:copper ion binding"/>
    <property type="evidence" value="ECO:0000318"/>
    <property type="project" value="GO_Central"/>
</dbReference>
<dbReference type="FunFam" id="3.20.20.380:FF:000001">
    <property type="entry name" value="Copper homeostasis protein CutC"/>
    <property type="match status" value="1"/>
</dbReference>
<dbReference type="Gene3D" id="3.20.20.380">
    <property type="entry name" value="Copper homeostasis (CutC) domain"/>
    <property type="match status" value="1"/>
</dbReference>
<dbReference type="HAMAP" id="MF_00795">
    <property type="entry name" value="CutC"/>
    <property type="match status" value="1"/>
</dbReference>
<dbReference type="InterPro" id="IPR005627">
    <property type="entry name" value="CutC-like"/>
</dbReference>
<dbReference type="InterPro" id="IPR036822">
    <property type="entry name" value="CutC-like_dom_sf"/>
</dbReference>
<dbReference type="PANTHER" id="PTHR12598">
    <property type="entry name" value="COPPER HOMEOSTASIS PROTEIN CUTC"/>
    <property type="match status" value="1"/>
</dbReference>
<dbReference type="PANTHER" id="PTHR12598:SF0">
    <property type="entry name" value="COPPER HOMEOSTASIS PROTEIN CUTC HOMOLOG"/>
    <property type="match status" value="1"/>
</dbReference>
<dbReference type="Pfam" id="PF03932">
    <property type="entry name" value="CutC"/>
    <property type="match status" value="1"/>
</dbReference>
<dbReference type="SUPFAM" id="SSF110395">
    <property type="entry name" value="CutC-like"/>
    <property type="match status" value="1"/>
</dbReference>
<keyword id="KW-0963">Cytoplasm</keyword>
<keyword id="KW-1185">Reference proteome</keyword>